<evidence type="ECO:0000255" key="1">
    <source>
        <dbReference type="PROSITE-ProRule" id="PRU00837"/>
    </source>
</evidence>
<evidence type="ECO:0000256" key="2">
    <source>
        <dbReference type="SAM" id="MobiDB-lite"/>
    </source>
</evidence>
<organism>
    <name type="scientific">Strongylocentrotus purpuratus</name>
    <name type="common">Purple sea urchin</name>
    <dbReference type="NCBI Taxonomy" id="7668"/>
    <lineage>
        <taxon>Eukaryota</taxon>
        <taxon>Metazoa</taxon>
        <taxon>Echinodermata</taxon>
        <taxon>Eleutherozoa</taxon>
        <taxon>Echinozoa</taxon>
        <taxon>Echinoidea</taxon>
        <taxon>Euechinoidea</taxon>
        <taxon>Echinacea</taxon>
        <taxon>Camarodonta</taxon>
        <taxon>Echinidea</taxon>
        <taxon>Strongylocentrotidae</taxon>
        <taxon>Strongylocentrotus</taxon>
    </lineage>
</organism>
<comment type="function">
    <text>Histones H1 are necessary for the condensation of nucleosome chains into higher-order structures.</text>
</comment>
<comment type="subcellular location">
    <subcellularLocation>
        <location>Nucleus</location>
    </subcellularLocation>
    <subcellularLocation>
        <location>Chromosome</location>
    </subcellularLocation>
</comment>
<comment type="developmental stage">
    <text>Early embryonic.</text>
</comment>
<comment type="similarity">
    <text evidence="1">Belongs to the histone H1/H5 family.</text>
</comment>
<protein>
    <recommendedName>
        <fullName>Histone H1, early embryonic</fullName>
    </recommendedName>
</protein>
<accession>P19375</accession>
<name>H1E_STRPU</name>
<keyword id="KW-0158">Chromosome</keyword>
<keyword id="KW-0238">DNA-binding</keyword>
<keyword id="KW-0539">Nucleus</keyword>
<keyword id="KW-1185">Reference proteome</keyword>
<feature type="chain" id="PRO_0000195946" description="Histone H1, early embryonic">
    <location>
        <begin position="1"/>
        <end position="205"/>
    </location>
</feature>
<feature type="domain" description="H15" evidence="1">
    <location>
        <begin position="17"/>
        <end position="91"/>
    </location>
</feature>
<feature type="region of interest" description="Disordered" evidence="2">
    <location>
        <begin position="1"/>
        <end position="21"/>
    </location>
</feature>
<feature type="region of interest" description="Disordered" evidence="2">
    <location>
        <begin position="94"/>
        <end position="205"/>
    </location>
</feature>
<feature type="compositionally biased region" description="Basic and acidic residues" evidence="2">
    <location>
        <begin position="98"/>
        <end position="124"/>
    </location>
</feature>
<feature type="compositionally biased region" description="Basic residues" evidence="2">
    <location>
        <begin position="135"/>
        <end position="150"/>
    </location>
</feature>
<feature type="compositionally biased region" description="Basic residues" evidence="2">
    <location>
        <begin position="157"/>
        <end position="205"/>
    </location>
</feature>
<sequence length="205" mass="22175">MAEKNSSKKVTTKKPAAHPPAAEMVATAITELKDRNGSSLQAIKKYIATNFDVQMDRQLLFIKRALKSGVEKGKLVQTKGKGASGSFKVNVQAAKAQASEKAKKEKEKAKLLAQREKAKEKGCSEEGETAEGSRPKKVKAAPKKAKKPVKKTTEKKEKKKTPKKAPKKPAAKKSTPKKTPKKAAAKKPKTAKPKKPAXKKAAKSK</sequence>
<proteinExistence type="evidence at transcript level"/>
<dbReference type="EMBL" id="V01354">
    <property type="protein sequence ID" value="CAA24644.1"/>
    <property type="molecule type" value="Genomic_DNA"/>
</dbReference>
<dbReference type="RefSeq" id="NP_999714.1">
    <property type="nucleotide sequence ID" value="NM_214549.1"/>
</dbReference>
<dbReference type="EnsemblMetazoa" id="NM_214549">
    <property type="protein sequence ID" value="NP_999714"/>
    <property type="gene ID" value="LOC373342"/>
</dbReference>
<dbReference type="GeneID" id="373342"/>
<dbReference type="KEGG" id="spu:373342"/>
<dbReference type="eggNOG" id="KOG4012">
    <property type="taxonomic scope" value="Eukaryota"/>
</dbReference>
<dbReference type="HOGENOM" id="CLU_052897_1_2_1"/>
<dbReference type="InParanoid" id="P19375"/>
<dbReference type="OMA" id="ANYDSHI"/>
<dbReference type="OrthoDB" id="10070184at2759"/>
<dbReference type="PhylomeDB" id="P19375"/>
<dbReference type="Proteomes" id="UP000007110">
    <property type="component" value="Unassembled WGS sequence"/>
</dbReference>
<dbReference type="GO" id="GO:0000786">
    <property type="term" value="C:nucleosome"/>
    <property type="evidence" value="ECO:0007669"/>
    <property type="project" value="InterPro"/>
</dbReference>
<dbReference type="GO" id="GO:0005634">
    <property type="term" value="C:nucleus"/>
    <property type="evidence" value="ECO:0000318"/>
    <property type="project" value="GO_Central"/>
</dbReference>
<dbReference type="GO" id="GO:0003690">
    <property type="term" value="F:double-stranded DNA binding"/>
    <property type="evidence" value="ECO:0000318"/>
    <property type="project" value="GO_Central"/>
</dbReference>
<dbReference type="GO" id="GO:0031492">
    <property type="term" value="F:nucleosomal DNA binding"/>
    <property type="evidence" value="ECO:0000318"/>
    <property type="project" value="GO_Central"/>
</dbReference>
<dbReference type="GO" id="GO:0030527">
    <property type="term" value="F:structural constituent of chromatin"/>
    <property type="evidence" value="ECO:0007669"/>
    <property type="project" value="InterPro"/>
</dbReference>
<dbReference type="GO" id="GO:0030261">
    <property type="term" value="P:chromosome condensation"/>
    <property type="evidence" value="ECO:0000318"/>
    <property type="project" value="GO_Central"/>
</dbReference>
<dbReference type="GO" id="GO:0045910">
    <property type="term" value="P:negative regulation of DNA recombination"/>
    <property type="evidence" value="ECO:0000318"/>
    <property type="project" value="GO_Central"/>
</dbReference>
<dbReference type="GO" id="GO:0006334">
    <property type="term" value="P:nucleosome assembly"/>
    <property type="evidence" value="ECO:0007669"/>
    <property type="project" value="InterPro"/>
</dbReference>
<dbReference type="CDD" id="cd00073">
    <property type="entry name" value="H15"/>
    <property type="match status" value="1"/>
</dbReference>
<dbReference type="FunFam" id="1.10.10.10:FF:000140">
    <property type="entry name" value="Histone H1.0"/>
    <property type="match status" value="1"/>
</dbReference>
<dbReference type="Gene3D" id="1.10.10.10">
    <property type="entry name" value="Winged helix-like DNA-binding domain superfamily/Winged helix DNA-binding domain"/>
    <property type="match status" value="1"/>
</dbReference>
<dbReference type="InterPro" id="IPR005819">
    <property type="entry name" value="H1/H5"/>
</dbReference>
<dbReference type="InterPro" id="IPR005818">
    <property type="entry name" value="Histone_H1/H5_H15"/>
</dbReference>
<dbReference type="InterPro" id="IPR036388">
    <property type="entry name" value="WH-like_DNA-bd_sf"/>
</dbReference>
<dbReference type="InterPro" id="IPR036390">
    <property type="entry name" value="WH_DNA-bd_sf"/>
</dbReference>
<dbReference type="PANTHER" id="PTHR11467">
    <property type="entry name" value="HISTONE H1"/>
    <property type="match status" value="1"/>
</dbReference>
<dbReference type="PANTHER" id="PTHR11467:SF177">
    <property type="entry name" value="HISTONE H1, EARLY EMBRYONIC"/>
    <property type="match status" value="1"/>
</dbReference>
<dbReference type="Pfam" id="PF00538">
    <property type="entry name" value="Linker_histone"/>
    <property type="match status" value="1"/>
</dbReference>
<dbReference type="PRINTS" id="PR00624">
    <property type="entry name" value="HISTONEH5"/>
</dbReference>
<dbReference type="SMART" id="SM00526">
    <property type="entry name" value="H15"/>
    <property type="match status" value="1"/>
</dbReference>
<dbReference type="SUPFAM" id="SSF46785">
    <property type="entry name" value="Winged helix' DNA-binding domain"/>
    <property type="match status" value="1"/>
</dbReference>
<dbReference type="PROSITE" id="PS51504">
    <property type="entry name" value="H15"/>
    <property type="match status" value="1"/>
</dbReference>
<reference key="1">
    <citation type="journal article" date="1982" name="J. Biol. Chem.">
        <title>The nucleotide and amino acid coding sequence of a gene for H1 histone that interacts with euchromatin. The early embryonic H1 gene of the sea urchin Strongylocentrotus purpuratus.</title>
        <authorList>
            <person name="Levy S."/>
            <person name="Sures I."/>
            <person name="Kedes L."/>
        </authorList>
    </citation>
    <scope>NUCLEOTIDE SEQUENCE [GENOMIC DNA]</scope>
</reference>